<evidence type="ECO:0000255" key="1">
    <source>
        <dbReference type="HAMAP-Rule" id="MF_01462"/>
    </source>
</evidence>
<comment type="function">
    <text evidence="1">Part of the energy-coupling factor (ECF) transporter complex CbiMNOQ involved in cobalt import.</text>
</comment>
<comment type="pathway">
    <text evidence="1">Cofactor biosynthesis; adenosylcobalamin biosynthesis.</text>
</comment>
<comment type="subunit">
    <text evidence="1">Forms an energy-coupling factor (ECF) transporter complex composed of an ATP-binding protein (A component, CbiO), a transmembrane protein (T component, CbiQ) and 2 possible substrate-capture proteins (S components, CbiM and CbiN) of unknown stoichimetry.</text>
</comment>
<comment type="subcellular location">
    <subcellularLocation>
        <location evidence="1">Cell membrane</location>
        <topology evidence="1">Multi-pass membrane protein</topology>
    </subcellularLocation>
</comment>
<comment type="similarity">
    <text evidence="1">Belongs to the CbiM family.</text>
</comment>
<gene>
    <name evidence="1" type="primary">cbiM</name>
    <name type="ordered locus">Lreu_1709</name>
</gene>
<keyword id="KW-1003">Cell membrane</keyword>
<keyword id="KW-0169">Cobalamin biosynthesis</keyword>
<keyword id="KW-0170">Cobalt</keyword>
<keyword id="KW-0171">Cobalt transport</keyword>
<keyword id="KW-0406">Ion transport</keyword>
<keyword id="KW-0472">Membrane</keyword>
<keyword id="KW-1185">Reference proteome</keyword>
<keyword id="KW-0732">Signal</keyword>
<keyword id="KW-0812">Transmembrane</keyword>
<keyword id="KW-1133">Transmembrane helix</keyword>
<keyword id="KW-0813">Transport</keyword>
<dbReference type="EMBL" id="CP000705">
    <property type="protein sequence ID" value="ABQ83948.1"/>
    <property type="molecule type" value="Genomic_DNA"/>
</dbReference>
<dbReference type="RefSeq" id="WP_003669133.1">
    <property type="nucleotide sequence ID" value="NC_009513.1"/>
</dbReference>
<dbReference type="SMR" id="A5VM74"/>
<dbReference type="STRING" id="557436.Lreu_1709"/>
<dbReference type="KEGG" id="lre:Lreu_1709"/>
<dbReference type="PATRIC" id="fig|557436.17.peg.631"/>
<dbReference type="eggNOG" id="COG0310">
    <property type="taxonomic scope" value="Bacteria"/>
</dbReference>
<dbReference type="HOGENOM" id="CLU_052508_3_0_9"/>
<dbReference type="OMA" id="GTCSHPC"/>
<dbReference type="UniPathway" id="UPA00148"/>
<dbReference type="Proteomes" id="UP000001991">
    <property type="component" value="Chromosome"/>
</dbReference>
<dbReference type="GO" id="GO:0043190">
    <property type="term" value="C:ATP-binding cassette (ABC) transporter complex"/>
    <property type="evidence" value="ECO:0007669"/>
    <property type="project" value="InterPro"/>
</dbReference>
<dbReference type="GO" id="GO:0015087">
    <property type="term" value="F:cobalt ion transmembrane transporter activity"/>
    <property type="evidence" value="ECO:0007669"/>
    <property type="project" value="UniProtKB-UniRule"/>
</dbReference>
<dbReference type="GO" id="GO:0009236">
    <property type="term" value="P:cobalamin biosynthetic process"/>
    <property type="evidence" value="ECO:0007669"/>
    <property type="project" value="UniProtKB-UniRule"/>
</dbReference>
<dbReference type="FunFam" id="1.10.1760.20:FF:000001">
    <property type="entry name" value="Cobalt transport protein CbiM"/>
    <property type="match status" value="1"/>
</dbReference>
<dbReference type="Gene3D" id="1.10.1760.20">
    <property type="match status" value="1"/>
</dbReference>
<dbReference type="HAMAP" id="MF_01462">
    <property type="entry name" value="CbiM"/>
    <property type="match status" value="1"/>
</dbReference>
<dbReference type="InterPro" id="IPR018024">
    <property type="entry name" value="CbiM"/>
</dbReference>
<dbReference type="InterPro" id="IPR002751">
    <property type="entry name" value="CbiM/NikMN"/>
</dbReference>
<dbReference type="NCBIfam" id="TIGR00123">
    <property type="entry name" value="cbiM"/>
    <property type="match status" value="1"/>
</dbReference>
<dbReference type="NCBIfam" id="NF006184">
    <property type="entry name" value="PRK08319.1"/>
    <property type="match status" value="1"/>
</dbReference>
<dbReference type="PANTHER" id="PTHR43627">
    <property type="match status" value="1"/>
</dbReference>
<dbReference type="PANTHER" id="PTHR43627:SF1">
    <property type="entry name" value="COBALT TRANSPORT PROTEIN CBIM"/>
    <property type="match status" value="1"/>
</dbReference>
<dbReference type="Pfam" id="PF01891">
    <property type="entry name" value="CbiM"/>
    <property type="match status" value="1"/>
</dbReference>
<organism>
    <name type="scientific">Limosilactobacillus reuteri (strain DSM 20016)</name>
    <name type="common">Lactobacillus reuteri</name>
    <dbReference type="NCBI Taxonomy" id="557436"/>
    <lineage>
        <taxon>Bacteria</taxon>
        <taxon>Bacillati</taxon>
        <taxon>Bacillota</taxon>
        <taxon>Bacilli</taxon>
        <taxon>Lactobacillales</taxon>
        <taxon>Lactobacillaceae</taxon>
        <taxon>Limosilactobacillus</taxon>
    </lineage>
</organism>
<name>CBIM_LIMRD</name>
<feature type="signal peptide" evidence="1">
    <location>
        <begin position="1"/>
        <end position="31"/>
    </location>
</feature>
<feature type="chain" id="PRO_5000251465" description="Cobalt transport protein CbiM">
    <location>
        <begin position="32"/>
        <end position="248"/>
    </location>
</feature>
<feature type="transmembrane region" description="Helical" evidence="1">
    <location>
        <begin position="39"/>
        <end position="59"/>
    </location>
</feature>
<feature type="transmembrane region" description="Helical" evidence="1">
    <location>
        <begin position="75"/>
        <end position="95"/>
    </location>
</feature>
<feature type="transmembrane region" description="Helical" evidence="1">
    <location>
        <begin position="107"/>
        <end position="127"/>
    </location>
</feature>
<feature type="transmembrane region" description="Helical" evidence="1">
    <location>
        <begin position="139"/>
        <end position="159"/>
    </location>
</feature>
<feature type="transmembrane region" description="Helical" evidence="1">
    <location>
        <begin position="173"/>
        <end position="195"/>
    </location>
</feature>
<feature type="transmembrane region" description="Helical" evidence="1">
    <location>
        <begin position="213"/>
        <end position="233"/>
    </location>
</feature>
<sequence length="248" mass="26992">MLKVIKKYRKFITFLMIGLVYTLAYPATAHAMHIMEGMLPPRWCIFWYAVSLPFFIYGLYRMYKIVNSGVPNAKVMLALCGAFVFVLSSLKLPSVTGSCSHPTGVGLGTVLFGPGVMSVLGVIVLLFQALLLAHGGITTLGANEFSMTIVGPIVGYAVWKLCRAMKVSRSVSLFLCAMFADWSTYVTTAFQLAIVFPDPNGGVAAALIKFLSIYAITQIPLAIAEGLLTVIVYNLVISNDLWKESALQ</sequence>
<protein>
    <recommendedName>
        <fullName evidence="1">Cobalt transport protein CbiM</fullName>
    </recommendedName>
    <alternativeName>
        <fullName evidence="1">Energy-coupling factor transporter probable substrate-capture protein CbiM</fullName>
        <shortName evidence="1">ECF transporter S component CbiM</shortName>
    </alternativeName>
</protein>
<reference key="1">
    <citation type="journal article" date="2011" name="PLoS Genet.">
        <title>The evolution of host specialization in the vertebrate gut symbiont Lactobacillus reuteri.</title>
        <authorList>
            <person name="Frese S.A."/>
            <person name="Benson A.K."/>
            <person name="Tannock G.W."/>
            <person name="Loach D.M."/>
            <person name="Kim J."/>
            <person name="Zhang M."/>
            <person name="Oh P.L."/>
            <person name="Heng N.C."/>
            <person name="Patil P.B."/>
            <person name="Juge N."/>
            <person name="Mackenzie D.A."/>
            <person name="Pearson B.M."/>
            <person name="Lapidus A."/>
            <person name="Dalin E."/>
            <person name="Tice H."/>
            <person name="Goltsman E."/>
            <person name="Land M."/>
            <person name="Hauser L."/>
            <person name="Ivanova N."/>
            <person name="Kyrpides N.C."/>
            <person name="Walter J."/>
        </authorList>
    </citation>
    <scope>NUCLEOTIDE SEQUENCE [LARGE SCALE GENOMIC DNA]</scope>
    <source>
        <strain>DSM 20016</strain>
    </source>
</reference>
<proteinExistence type="inferred from homology"/>
<accession>A5VM74</accession>